<keyword id="KW-1015">Disulfide bond</keyword>
<keyword id="KW-0325">Glycoprotein</keyword>
<keyword id="KW-0326">Glycosidase</keyword>
<keyword id="KW-0378">Hydrolase</keyword>
<keyword id="KW-0732">Signal</keyword>
<dbReference type="EC" id="3.2.1.153"/>
<dbReference type="EMBL" id="FJ178114">
    <property type="protein sequence ID" value="ACI24008.1"/>
    <property type="molecule type" value="mRNA"/>
</dbReference>
<dbReference type="SMR" id="B6DXP5"/>
<dbReference type="CAZy" id="GH32">
    <property type="family name" value="Glycoside Hydrolase Family 32"/>
</dbReference>
<dbReference type="GlyCosmos" id="B6DXP5">
    <property type="glycosylation" value="4 sites, No reported glycans"/>
</dbReference>
<dbReference type="GO" id="GO:0033948">
    <property type="term" value="F:fructan beta-(2,1)-fructosidase activity"/>
    <property type="evidence" value="ECO:0007669"/>
    <property type="project" value="UniProtKB-EC"/>
</dbReference>
<dbReference type="GO" id="GO:0005975">
    <property type="term" value="P:carbohydrate metabolic process"/>
    <property type="evidence" value="ECO:0007669"/>
    <property type="project" value="InterPro"/>
</dbReference>
<dbReference type="CDD" id="cd18624">
    <property type="entry name" value="GH32_Fruct1-like"/>
    <property type="match status" value="1"/>
</dbReference>
<dbReference type="FunFam" id="2.115.10.20:FF:000001">
    <property type="entry name" value="Beta-fructofuranosidase, insoluble isoenzyme CWINV1"/>
    <property type="match status" value="1"/>
</dbReference>
<dbReference type="FunFam" id="2.60.120.560:FF:000002">
    <property type="entry name" value="Beta-fructofuranosidase, insoluble isoenzyme CWINV1"/>
    <property type="match status" value="1"/>
</dbReference>
<dbReference type="Gene3D" id="2.60.120.560">
    <property type="entry name" value="Exo-inulinase, domain 1"/>
    <property type="match status" value="1"/>
</dbReference>
<dbReference type="Gene3D" id="2.115.10.20">
    <property type="entry name" value="Glycosyl hydrolase domain, family 43"/>
    <property type="match status" value="1"/>
</dbReference>
<dbReference type="InterPro" id="IPR013320">
    <property type="entry name" value="ConA-like_dom_sf"/>
</dbReference>
<dbReference type="InterPro" id="IPR050551">
    <property type="entry name" value="Fructan_Metab_Enzymes"/>
</dbReference>
<dbReference type="InterPro" id="IPR001362">
    <property type="entry name" value="Glyco_hydro_32"/>
</dbReference>
<dbReference type="InterPro" id="IPR013189">
    <property type="entry name" value="Glyco_hydro_32_C"/>
</dbReference>
<dbReference type="InterPro" id="IPR013148">
    <property type="entry name" value="Glyco_hydro_32_N"/>
</dbReference>
<dbReference type="InterPro" id="IPR023296">
    <property type="entry name" value="Glyco_hydro_beta-prop_sf"/>
</dbReference>
<dbReference type="PANTHER" id="PTHR31953">
    <property type="entry name" value="BETA-FRUCTOFURANOSIDASE, INSOLUBLE ISOENZYME CWINV1-RELATED"/>
    <property type="match status" value="1"/>
</dbReference>
<dbReference type="Pfam" id="PF08244">
    <property type="entry name" value="Glyco_hydro_32C"/>
    <property type="match status" value="1"/>
</dbReference>
<dbReference type="Pfam" id="PF00251">
    <property type="entry name" value="Glyco_hydro_32N"/>
    <property type="match status" value="1"/>
</dbReference>
<dbReference type="SMART" id="SM00640">
    <property type="entry name" value="Glyco_32"/>
    <property type="match status" value="1"/>
</dbReference>
<dbReference type="SUPFAM" id="SSF75005">
    <property type="entry name" value="Arabinanase/levansucrase/invertase"/>
    <property type="match status" value="1"/>
</dbReference>
<dbReference type="SUPFAM" id="SSF49899">
    <property type="entry name" value="Concanavalin A-like lectins/glucanases"/>
    <property type="match status" value="1"/>
</dbReference>
<protein>
    <recommendedName>
        <fullName evidence="4">Fructan 1-exohydrolase</fullName>
        <ecNumber>3.2.1.153</ecNumber>
    </recommendedName>
</protein>
<name>1FEH_LEYCH</name>
<proteinExistence type="evidence at transcript level"/>
<evidence type="ECO:0000250" key="1">
    <source>
        <dbReference type="UniProtKB" id="Q43866"/>
    </source>
</evidence>
<evidence type="ECO:0000250" key="2">
    <source>
        <dbReference type="UniProtKB" id="Q84PN8"/>
    </source>
</evidence>
<evidence type="ECO:0000255" key="3"/>
<evidence type="ECO:0000312" key="4">
    <source>
        <dbReference type="EMBL" id="ACI24008.1"/>
    </source>
</evidence>
<gene>
    <name evidence="4" type="primary">1-FEH</name>
</gene>
<sequence length="600" mass="67194">MAQAWAFLLPVLFFGSYVTNLFLPTYASSPLCSGDGGRSFLCAQAPKDKDPSPASTMYKTAFHFQSAKNWMNDPSGPMYFNGIYHEFYQYNLNGPIFGDIVWGHSVSTDLINWIGLGPALVRDTSSDIDGCWTGSVTILPGGKPVIIYTGGDIDQHQVQNIAFPKNRSDPYLREWIKAANNPVLRPDEPGMNSIEFRDPTTGWIGPDGLWRMAVGGELNGYSAALLYKSEDFLNWTKVDHPLYSHNGSNMWECPDFFAVLPGNNGGLDLSAAIPQGAKHALKMSVDSVDKYLIGVYDLKRDAFVPDNVIDDRRLWLRIDYGTFYASKSFFDSNKGRRIIWGWSRETDSPSDDLEKGWAGLHTIPRRIWLADDGKQLLQWPVDEIEFLRTNEINHQGLELNKGDLFEIKEVDTFQADVEIDFELASIDDADPFDPSWLLDPEKHCGEVGASVPGGIGPFGLVILASDNMEEHTEVYFRVYKLQEKYMVLMCSDLRRSSMRPDLEKPAYGGFFEFDLAKERKISLRTLIDRSAVESFGGGGRVCITSRVYPAVLADVGRAHMYAFNNGSATVRVPQLSAWTMRKAQVNVEKGWSAIQNRGSI</sequence>
<reference evidence="4" key="1">
    <citation type="submission" date="2008-09" db="EMBL/GenBank/DDBJ databases">
        <title>Cloning and functional analysis of fructan 1-exohydrolase (1-FEH) from Leymus chinensis.</title>
        <authorList>
            <person name="Wang L."/>
            <person name="Li X."/>
            <person name="Zhang J."/>
            <person name="Peng X."/>
            <person name="Su M."/>
            <person name="Chen Z."/>
            <person name="Liu G."/>
        </authorList>
    </citation>
    <scope>NUCLEOTIDE SEQUENCE [MRNA]</scope>
</reference>
<comment type="function">
    <text evidence="2">Hydrolyzes inulin-type beta-(2,1)-fructans. May play a role as a beta-(2,1)-trimmer during graminan biosynthesis (By similarity).</text>
</comment>
<comment type="catalytic activity">
    <reaction evidence="2">
        <text>Hydrolysis of terminal, non-reducing (2-&gt;1)-linked beta-D-fructofuranose residues in fructans.</text>
        <dbReference type="EC" id="3.2.1.153"/>
    </reaction>
</comment>
<comment type="activity regulation">
    <text evidence="2">Inhibited by sucrose.</text>
</comment>
<comment type="similarity">
    <text evidence="3">Belongs to the glycosyl hydrolase 32 family.</text>
</comment>
<accession>B6DXP5</accession>
<organism>
    <name type="scientific">Leymus chinensis</name>
    <name type="common">Chinese lyme grass</name>
    <name type="synonym">Elymus chinensis</name>
    <dbReference type="NCBI Taxonomy" id="52714"/>
    <lineage>
        <taxon>Eukaryota</taxon>
        <taxon>Viridiplantae</taxon>
        <taxon>Streptophyta</taxon>
        <taxon>Embryophyta</taxon>
        <taxon>Tracheophyta</taxon>
        <taxon>Spermatophyta</taxon>
        <taxon>Magnoliopsida</taxon>
        <taxon>Liliopsida</taxon>
        <taxon>Poales</taxon>
        <taxon>Poaceae</taxon>
        <taxon>BOP clade</taxon>
        <taxon>Pooideae</taxon>
        <taxon>Triticodae</taxon>
        <taxon>Triticeae</taxon>
        <taxon>Hordeinae</taxon>
        <taxon>Leymus</taxon>
    </lineage>
</organism>
<feature type="signal peptide" evidence="3">
    <location>
        <begin position="1"/>
        <end position="27"/>
    </location>
</feature>
<feature type="chain" id="PRO_0000395558" description="Fructan 1-exohydrolase" evidence="3">
    <location>
        <begin position="28"/>
        <end position="600"/>
    </location>
</feature>
<feature type="active site" evidence="1">
    <location>
        <position position="73"/>
    </location>
</feature>
<feature type="glycosylation site" description="N-linked (GlcNAc...) asparagine" evidence="3">
    <location>
        <position position="166"/>
    </location>
</feature>
<feature type="glycosylation site" description="N-linked (GlcNAc...) asparagine" evidence="3">
    <location>
        <position position="234"/>
    </location>
</feature>
<feature type="glycosylation site" description="N-linked (GlcNAc...) asparagine" evidence="3">
    <location>
        <position position="246"/>
    </location>
</feature>
<feature type="glycosylation site" description="N-linked (GlcNAc...) asparagine" evidence="3">
    <location>
        <position position="565"/>
    </location>
</feature>
<feature type="disulfide bond" evidence="1">
    <location>
        <begin position="444"/>
        <end position="490"/>
    </location>
</feature>